<evidence type="ECO:0000255" key="1">
    <source>
        <dbReference type="HAMAP-Rule" id="MF_02112"/>
    </source>
</evidence>
<evidence type="ECO:0000256" key="2">
    <source>
        <dbReference type="SAM" id="MobiDB-lite"/>
    </source>
</evidence>
<comment type="subunit">
    <text evidence="1">Homohexamer. Assembles into a hexameric ring structure.</text>
</comment>
<comment type="similarity">
    <text evidence="1">Belongs to the AAA ATPase family.</text>
</comment>
<reference key="1">
    <citation type="journal article" date="2009" name="J. Bacteriol.">
        <title>Comparison of the complete genome sequences of Bifidobacterium animalis subsp. lactis DSM 10140 and Bl-04.</title>
        <authorList>
            <person name="Barrangou R."/>
            <person name="Briczinski E.P."/>
            <person name="Traeger L.L."/>
            <person name="Loquasto J.R."/>
            <person name="Richards M."/>
            <person name="Horvath P."/>
            <person name="Coute-Monvoisin A.-C."/>
            <person name="Leyer G."/>
            <person name="Rendulic S."/>
            <person name="Steele J.L."/>
            <person name="Broadbent J.R."/>
            <person name="Oberg T."/>
            <person name="Dudley E.G."/>
            <person name="Schuster S."/>
            <person name="Romero D.A."/>
            <person name="Roberts R.F."/>
        </authorList>
    </citation>
    <scope>NUCLEOTIDE SEQUENCE [LARGE SCALE GENOMIC DNA]</scope>
    <source>
        <strain>Bl-04 / DGCC2908 / RB 4825 / SD5219</strain>
    </source>
</reference>
<sequence>MGQEKHTDAASQSRDPEAVAAHENDQLRQRNHALAKALTRATEELRKAKAQLEQFMAPPLTMATMVRVHRCSTDEHGVRHASAEILNGNRRQIVPLSPTVNPAQLGSGQGVLLDANMVIVDSCETPTTGPMRAVSESLADGRLIVSDVGGNRGVVMRASAVARTPINVDDRVVIDPSGTYVLSVLPQEQAQDLLLEETPDVSFTDIGGLDEQIARIRDAVQLPFQHRDLFDRFDLKAPKGVLLYGPPGNGKTLIAKAIAHELAAGSGNDGVFLSVKGPELLNKFVGESERLIRRIFERAKELSGAGRPVIVFIDEMDSLLRTRGTGVSSDVETTIVPQFLTELDGVESLDDVMVIGASNRIDMIDPAVLRPGRLDVKIHVTRPDETAAMAITRHYLTDALPLEPGRDADALAASLVRDLFRRDESRLLATLDEQGRRRGIYMADIVSGAMLRNIVDRAKTKAVKAEILHGSVSRDDEPQGITEARIHEAIDDEYEQNRSTINETDPGQWLRINALTLAADGV</sequence>
<organism>
    <name type="scientific">Bifidobacterium animalis subsp. lactis (strain Bl-04 / DGCC2908 / RB 4825 / SD5219)</name>
    <dbReference type="NCBI Taxonomy" id="580050"/>
    <lineage>
        <taxon>Bacteria</taxon>
        <taxon>Bacillati</taxon>
        <taxon>Actinomycetota</taxon>
        <taxon>Actinomycetes</taxon>
        <taxon>Bifidobacteriales</taxon>
        <taxon>Bifidobacteriaceae</taxon>
        <taxon>Bifidobacterium</taxon>
    </lineage>
</organism>
<accession>C6A7B2</accession>
<proteinExistence type="inferred from homology"/>
<gene>
    <name evidence="1" type="primary">arc</name>
    <name type="ordered locus">Balac_0637</name>
</gene>
<feature type="chain" id="PRO_0000396966" description="AAA ATPase forming ring-shaped complexes">
    <location>
        <begin position="1"/>
        <end position="522"/>
    </location>
</feature>
<feature type="region of interest" description="Disordered" evidence="2">
    <location>
        <begin position="1"/>
        <end position="26"/>
    </location>
</feature>
<feature type="coiled-coil region" evidence="1">
    <location>
        <begin position="20"/>
        <end position="57"/>
    </location>
</feature>
<feature type="binding site" evidence="1">
    <location>
        <begin position="248"/>
        <end position="253"/>
    </location>
    <ligand>
        <name>ATP</name>
        <dbReference type="ChEBI" id="CHEBI:30616"/>
    </ligand>
</feature>
<dbReference type="EMBL" id="CP001515">
    <property type="protein sequence ID" value="ACS46010.1"/>
    <property type="molecule type" value="Genomic_DNA"/>
</dbReference>
<dbReference type="RefSeq" id="WP_004218902.1">
    <property type="nucleotide sequence ID" value="NC_012814.1"/>
</dbReference>
<dbReference type="SMR" id="C6A7B2"/>
<dbReference type="GeneID" id="29695932"/>
<dbReference type="KEGG" id="blc:Balac_0637"/>
<dbReference type="PATRIC" id="fig|442563.4.peg.1223"/>
<dbReference type="HOGENOM" id="CLU_036054_0_0_11"/>
<dbReference type="GO" id="GO:0000502">
    <property type="term" value="C:proteasome complex"/>
    <property type="evidence" value="ECO:0007669"/>
    <property type="project" value="InterPro"/>
</dbReference>
<dbReference type="GO" id="GO:0005524">
    <property type="term" value="F:ATP binding"/>
    <property type="evidence" value="ECO:0007669"/>
    <property type="project" value="UniProtKB-UniRule"/>
</dbReference>
<dbReference type="GO" id="GO:0016887">
    <property type="term" value="F:ATP hydrolysis activity"/>
    <property type="evidence" value="ECO:0007669"/>
    <property type="project" value="UniProtKB-UniRule"/>
</dbReference>
<dbReference type="GO" id="GO:0019941">
    <property type="term" value="P:modification-dependent protein catabolic process"/>
    <property type="evidence" value="ECO:0007669"/>
    <property type="project" value="InterPro"/>
</dbReference>
<dbReference type="GO" id="GO:0010498">
    <property type="term" value="P:proteasomal protein catabolic process"/>
    <property type="evidence" value="ECO:0007669"/>
    <property type="project" value="InterPro"/>
</dbReference>
<dbReference type="FunFam" id="3.40.50.300:FF:001025">
    <property type="entry name" value="ATPase family, AAA domain-containing 2B"/>
    <property type="match status" value="1"/>
</dbReference>
<dbReference type="Gene3D" id="1.10.8.60">
    <property type="match status" value="1"/>
</dbReference>
<dbReference type="Gene3D" id="2.40.50.140">
    <property type="entry name" value="Nucleic acid-binding proteins"/>
    <property type="match status" value="1"/>
</dbReference>
<dbReference type="Gene3D" id="3.40.50.300">
    <property type="entry name" value="P-loop containing nucleotide triphosphate hydrolases"/>
    <property type="match status" value="1"/>
</dbReference>
<dbReference type="HAMAP" id="MF_02112">
    <property type="entry name" value="ARC_ATPase"/>
    <property type="match status" value="1"/>
</dbReference>
<dbReference type="InterPro" id="IPR003593">
    <property type="entry name" value="AAA+_ATPase"/>
</dbReference>
<dbReference type="InterPro" id="IPR050168">
    <property type="entry name" value="AAA_ATPase_domain"/>
</dbReference>
<dbReference type="InterPro" id="IPR003959">
    <property type="entry name" value="ATPase_AAA_core"/>
</dbReference>
<dbReference type="InterPro" id="IPR003960">
    <property type="entry name" value="ATPase_AAA_CS"/>
</dbReference>
<dbReference type="InterPro" id="IPR012340">
    <property type="entry name" value="NA-bd_OB-fold"/>
</dbReference>
<dbReference type="InterPro" id="IPR027417">
    <property type="entry name" value="P-loop_NTPase"/>
</dbReference>
<dbReference type="InterPro" id="IPR032501">
    <property type="entry name" value="Prot_ATP_ID_OB_2nd"/>
</dbReference>
<dbReference type="InterPro" id="IPR041626">
    <property type="entry name" value="Prot_ATP_ID_OB_N"/>
</dbReference>
<dbReference type="InterPro" id="IPR022482">
    <property type="entry name" value="Proteasome_ATPase"/>
</dbReference>
<dbReference type="NCBIfam" id="TIGR03689">
    <property type="entry name" value="pup_AAA"/>
    <property type="match status" value="1"/>
</dbReference>
<dbReference type="PANTHER" id="PTHR23077">
    <property type="entry name" value="AAA-FAMILY ATPASE"/>
    <property type="match status" value="1"/>
</dbReference>
<dbReference type="PANTHER" id="PTHR23077:SF144">
    <property type="entry name" value="PROTEASOME-ASSOCIATED ATPASE"/>
    <property type="match status" value="1"/>
</dbReference>
<dbReference type="Pfam" id="PF00004">
    <property type="entry name" value="AAA"/>
    <property type="match status" value="1"/>
</dbReference>
<dbReference type="Pfam" id="PF16450">
    <property type="entry name" value="Prot_ATP_ID_OB_C"/>
    <property type="match status" value="1"/>
</dbReference>
<dbReference type="Pfam" id="PF17758">
    <property type="entry name" value="Prot_ATP_ID_OB_N"/>
    <property type="match status" value="1"/>
</dbReference>
<dbReference type="SMART" id="SM00382">
    <property type="entry name" value="AAA"/>
    <property type="match status" value="1"/>
</dbReference>
<dbReference type="SUPFAM" id="SSF52540">
    <property type="entry name" value="P-loop containing nucleoside triphosphate hydrolases"/>
    <property type="match status" value="1"/>
</dbReference>
<dbReference type="PROSITE" id="PS00674">
    <property type="entry name" value="AAA"/>
    <property type="match status" value="1"/>
</dbReference>
<keyword id="KW-0067">ATP-binding</keyword>
<keyword id="KW-0175">Coiled coil</keyword>
<keyword id="KW-0547">Nucleotide-binding</keyword>
<protein>
    <recommendedName>
        <fullName evidence="1">AAA ATPase forming ring-shaped complexes</fullName>
        <shortName evidence="1">ARC</shortName>
    </recommendedName>
</protein>
<name>ARC_BIFLB</name>